<proteinExistence type="inferred from homology"/>
<reference key="1">
    <citation type="journal article" date="2008" name="J. Bacteriol.">
        <title>The pangenome structure of Escherichia coli: comparative genomic analysis of E. coli commensal and pathogenic isolates.</title>
        <authorList>
            <person name="Rasko D.A."/>
            <person name="Rosovitz M.J."/>
            <person name="Myers G.S.A."/>
            <person name="Mongodin E.F."/>
            <person name="Fricke W.F."/>
            <person name="Gajer P."/>
            <person name="Crabtree J."/>
            <person name="Sebaihia M."/>
            <person name="Thomson N.R."/>
            <person name="Chaudhuri R."/>
            <person name="Henderson I.R."/>
            <person name="Sperandio V."/>
            <person name="Ravel J."/>
        </authorList>
    </citation>
    <scope>NUCLEOTIDE SEQUENCE [LARGE SCALE GENOMIC DNA]</scope>
    <source>
        <strain>HS</strain>
    </source>
</reference>
<protein>
    <recommendedName>
        <fullName>S-formylglutathione hydrolase YeiG</fullName>
        <shortName>FGH</shortName>
        <ecNumber>3.1.2.12</ecNumber>
    </recommendedName>
</protein>
<keyword id="KW-0378">Hydrolase</keyword>
<keyword id="KW-0719">Serine esterase</keyword>
<gene>
    <name type="primary">yeiG</name>
    <name type="ordered locus">EcHS_A2288</name>
</gene>
<feature type="chain" id="PRO_0000341674" description="S-formylglutathione hydrolase YeiG">
    <location>
        <begin position="1"/>
        <end position="278"/>
    </location>
</feature>
<feature type="active site" description="Charge relay system" evidence="1">
    <location>
        <position position="145"/>
    </location>
</feature>
<feature type="active site" description="Charge relay system" evidence="1">
    <location>
        <position position="223"/>
    </location>
</feature>
<feature type="active site" description="Charge relay system" evidence="1">
    <location>
        <position position="256"/>
    </location>
</feature>
<organism>
    <name type="scientific">Escherichia coli O9:H4 (strain HS)</name>
    <dbReference type="NCBI Taxonomy" id="331112"/>
    <lineage>
        <taxon>Bacteria</taxon>
        <taxon>Pseudomonadati</taxon>
        <taxon>Pseudomonadota</taxon>
        <taxon>Gammaproteobacteria</taxon>
        <taxon>Enterobacterales</taxon>
        <taxon>Enterobacteriaceae</taxon>
        <taxon>Escherichia</taxon>
    </lineage>
</organism>
<name>SFGH2_ECOHS</name>
<accession>A8A215</accession>
<comment type="function">
    <text evidence="1">Serine hydrolase involved in the detoxification of formaldehyde. Hydrolyzes S-formylglutathione to glutathione and formate (By similarity).</text>
</comment>
<comment type="catalytic activity">
    <reaction>
        <text>S-formylglutathione + H2O = formate + glutathione + H(+)</text>
        <dbReference type="Rhea" id="RHEA:14961"/>
        <dbReference type="ChEBI" id="CHEBI:15377"/>
        <dbReference type="ChEBI" id="CHEBI:15378"/>
        <dbReference type="ChEBI" id="CHEBI:15740"/>
        <dbReference type="ChEBI" id="CHEBI:57688"/>
        <dbReference type="ChEBI" id="CHEBI:57925"/>
        <dbReference type="EC" id="3.1.2.12"/>
    </reaction>
</comment>
<comment type="similarity">
    <text evidence="2">Belongs to the esterase D family.</text>
</comment>
<evidence type="ECO:0000250" key="1"/>
<evidence type="ECO:0000305" key="2"/>
<sequence length="278" mass="31259">MEMLEEHRCFEGWQQRWRHDSSTLNCPMTFSIFLPPPRDHTPPPVLYWLSGLTCNDENFTTKAGAQRVAAELGIVLVMPDTSPRGEKVANDDGYDLGQGAGFYLNATQPPWATHYRMYDYLRDELPALVQSQFNVSDRCAISGHSMGGHGALIMALKNPGKYTSVSAFAPIVNPCSVPWGIKAFSSYLGEDKNAWLEWDSCALMYASNAQDAIPTLIDQGDNDQFLADQLQPAVLAEAARQKAWPMTLRIQPGYDHSYYFIASFIEDHLRFHAQYLLK</sequence>
<dbReference type="EC" id="3.1.2.12"/>
<dbReference type="EMBL" id="CP000802">
    <property type="protein sequence ID" value="ABV06569.1"/>
    <property type="molecule type" value="Genomic_DNA"/>
</dbReference>
<dbReference type="RefSeq" id="WP_000425438.1">
    <property type="nucleotide sequence ID" value="NC_009800.1"/>
</dbReference>
<dbReference type="SMR" id="A8A215"/>
<dbReference type="ESTHER" id="ecoli-yeiG">
    <property type="family name" value="A85-EsteraseD-FGH"/>
</dbReference>
<dbReference type="MEROPS" id="S09.A39"/>
<dbReference type="KEGG" id="ecx:EcHS_A2288"/>
<dbReference type="HOGENOM" id="CLU_056472_0_0_6"/>
<dbReference type="GO" id="GO:0005829">
    <property type="term" value="C:cytosol"/>
    <property type="evidence" value="ECO:0007669"/>
    <property type="project" value="TreeGrafter"/>
</dbReference>
<dbReference type="GO" id="GO:0052689">
    <property type="term" value="F:carboxylic ester hydrolase activity"/>
    <property type="evidence" value="ECO:0007669"/>
    <property type="project" value="UniProtKB-KW"/>
</dbReference>
<dbReference type="GO" id="GO:0018738">
    <property type="term" value="F:S-formylglutathione hydrolase activity"/>
    <property type="evidence" value="ECO:0007669"/>
    <property type="project" value="UniProtKB-EC"/>
</dbReference>
<dbReference type="GO" id="GO:0046294">
    <property type="term" value="P:formaldehyde catabolic process"/>
    <property type="evidence" value="ECO:0007669"/>
    <property type="project" value="InterPro"/>
</dbReference>
<dbReference type="FunFam" id="3.40.50.1820:FF:000002">
    <property type="entry name" value="S-formylglutathione hydrolase"/>
    <property type="match status" value="1"/>
</dbReference>
<dbReference type="Gene3D" id="3.40.50.1820">
    <property type="entry name" value="alpha/beta hydrolase"/>
    <property type="match status" value="1"/>
</dbReference>
<dbReference type="InterPro" id="IPR029058">
    <property type="entry name" value="AB_hydrolase_fold"/>
</dbReference>
<dbReference type="InterPro" id="IPR000801">
    <property type="entry name" value="Esterase-like"/>
</dbReference>
<dbReference type="InterPro" id="IPR014186">
    <property type="entry name" value="S-formylglutathione_hydrol"/>
</dbReference>
<dbReference type="NCBIfam" id="TIGR02821">
    <property type="entry name" value="fghA_ester_D"/>
    <property type="match status" value="1"/>
</dbReference>
<dbReference type="PANTHER" id="PTHR10061">
    <property type="entry name" value="S-FORMYLGLUTATHIONE HYDROLASE"/>
    <property type="match status" value="1"/>
</dbReference>
<dbReference type="PANTHER" id="PTHR10061:SF1">
    <property type="entry name" value="S-FORMYLGLUTATHIONE HYDROLASE YEIG"/>
    <property type="match status" value="1"/>
</dbReference>
<dbReference type="Pfam" id="PF00756">
    <property type="entry name" value="Esterase"/>
    <property type="match status" value="1"/>
</dbReference>
<dbReference type="SUPFAM" id="SSF53474">
    <property type="entry name" value="alpha/beta-Hydrolases"/>
    <property type="match status" value="1"/>
</dbReference>